<name>C13A1_CAEEL</name>
<gene>
    <name type="primary">cyp-13A1</name>
    <name type="synonym">cyp13a1</name>
    <name type="ORF">T10B9.8</name>
</gene>
<evidence type="ECO:0000250" key="1">
    <source>
        <dbReference type="UniProtKB" id="Q16678"/>
    </source>
</evidence>
<evidence type="ECO:0000305" key="2"/>
<protein>
    <recommendedName>
        <fullName>Putative cytochrome P450 CYP13A1</fullName>
        <ecNumber>1.14.-.-</ecNumber>
    </recommendedName>
</protein>
<dbReference type="EC" id="1.14.-.-"/>
<dbReference type="EMBL" id="Z48717">
    <property type="protein sequence ID" value="CAA88610.1"/>
    <property type="molecule type" value="Genomic_DNA"/>
</dbReference>
<dbReference type="PIR" id="T24784">
    <property type="entry name" value="T24784"/>
</dbReference>
<dbReference type="RefSeq" id="NP_001369869.1">
    <property type="nucleotide sequence ID" value="NM_001383923.1"/>
</dbReference>
<dbReference type="RefSeq" id="NP_496108.1">
    <property type="nucleotide sequence ID" value="NM_063707.4"/>
</dbReference>
<dbReference type="SMR" id="Q27520"/>
<dbReference type="FunCoup" id="Q27520">
    <property type="interactions" value="109"/>
</dbReference>
<dbReference type="STRING" id="6239.T10B9.8.1"/>
<dbReference type="PaxDb" id="6239-T10B9.8"/>
<dbReference type="PeptideAtlas" id="Q27520"/>
<dbReference type="EnsemblMetazoa" id="T10B9.8.1">
    <property type="protein sequence ID" value="T10B9.8.1"/>
    <property type="gene ID" value="WBGene00011677"/>
</dbReference>
<dbReference type="EnsemblMetazoa" id="T10B9.8.2">
    <property type="protein sequence ID" value="T10B9.8.2"/>
    <property type="gene ID" value="WBGene00011677"/>
</dbReference>
<dbReference type="GeneID" id="188361"/>
<dbReference type="UCSC" id="T10B9.8">
    <property type="organism name" value="c. elegans"/>
</dbReference>
<dbReference type="AGR" id="WB:WBGene00011677"/>
<dbReference type="WormBase" id="T10B9.8">
    <property type="protein sequence ID" value="CE01660"/>
    <property type="gene ID" value="WBGene00011677"/>
    <property type="gene designation" value="cyp-13A1"/>
</dbReference>
<dbReference type="eggNOG" id="KOG0158">
    <property type="taxonomic scope" value="Eukaryota"/>
</dbReference>
<dbReference type="GeneTree" id="ENSGT00970000196408"/>
<dbReference type="HOGENOM" id="CLU_001570_5_2_1"/>
<dbReference type="InParanoid" id="Q27520"/>
<dbReference type="OMA" id="QMFKNPI"/>
<dbReference type="OrthoDB" id="2789670at2759"/>
<dbReference type="PhylomeDB" id="Q27520"/>
<dbReference type="PRO" id="PR:Q27520"/>
<dbReference type="Proteomes" id="UP000001940">
    <property type="component" value="Chromosome II"/>
</dbReference>
<dbReference type="Bgee" id="WBGene00011677">
    <property type="expression patterns" value="Expressed in multicellular organism and 2 other cell types or tissues"/>
</dbReference>
<dbReference type="GO" id="GO:0020037">
    <property type="term" value="F:heme binding"/>
    <property type="evidence" value="ECO:0007669"/>
    <property type="project" value="InterPro"/>
</dbReference>
<dbReference type="GO" id="GO:0005506">
    <property type="term" value="F:iron ion binding"/>
    <property type="evidence" value="ECO:0007669"/>
    <property type="project" value="InterPro"/>
</dbReference>
<dbReference type="GO" id="GO:0004497">
    <property type="term" value="F:monooxygenase activity"/>
    <property type="evidence" value="ECO:0007669"/>
    <property type="project" value="UniProtKB-KW"/>
</dbReference>
<dbReference type="GO" id="GO:0016705">
    <property type="term" value="F:oxidoreductase activity, acting on paired donors, with incorporation or reduction of molecular oxygen"/>
    <property type="evidence" value="ECO:0007669"/>
    <property type="project" value="InterPro"/>
</dbReference>
<dbReference type="CDD" id="cd11055">
    <property type="entry name" value="CYP3A-like"/>
    <property type="match status" value="1"/>
</dbReference>
<dbReference type="FunFam" id="1.10.630.10:FF:000182">
    <property type="entry name" value="Cytochrome P450 3A4"/>
    <property type="match status" value="1"/>
</dbReference>
<dbReference type="Gene3D" id="1.10.630.10">
    <property type="entry name" value="Cytochrome P450"/>
    <property type="match status" value="1"/>
</dbReference>
<dbReference type="InterPro" id="IPR001128">
    <property type="entry name" value="Cyt_P450"/>
</dbReference>
<dbReference type="InterPro" id="IPR017972">
    <property type="entry name" value="Cyt_P450_CS"/>
</dbReference>
<dbReference type="InterPro" id="IPR002401">
    <property type="entry name" value="Cyt_P450_E_grp-I"/>
</dbReference>
<dbReference type="InterPro" id="IPR036396">
    <property type="entry name" value="Cyt_P450_sf"/>
</dbReference>
<dbReference type="InterPro" id="IPR050476">
    <property type="entry name" value="Insect_CytP450_Detox"/>
</dbReference>
<dbReference type="PANTHER" id="PTHR24292">
    <property type="entry name" value="CYTOCHROME P450"/>
    <property type="match status" value="1"/>
</dbReference>
<dbReference type="PANTHER" id="PTHR24292:SF102">
    <property type="entry name" value="CYTOCHROME P450 FAMILY-RELATED"/>
    <property type="match status" value="1"/>
</dbReference>
<dbReference type="Pfam" id="PF00067">
    <property type="entry name" value="p450"/>
    <property type="match status" value="1"/>
</dbReference>
<dbReference type="PRINTS" id="PR00463">
    <property type="entry name" value="EP450I"/>
</dbReference>
<dbReference type="PRINTS" id="PR00385">
    <property type="entry name" value="P450"/>
</dbReference>
<dbReference type="SUPFAM" id="SSF48264">
    <property type="entry name" value="Cytochrome P450"/>
    <property type="match status" value="1"/>
</dbReference>
<dbReference type="PROSITE" id="PS00086">
    <property type="entry name" value="CYTOCHROME_P450"/>
    <property type="match status" value="1"/>
</dbReference>
<accession>Q27520</accession>
<proteinExistence type="inferred from homology"/>
<organism>
    <name type="scientific">Caenorhabditis elegans</name>
    <dbReference type="NCBI Taxonomy" id="6239"/>
    <lineage>
        <taxon>Eukaryota</taxon>
        <taxon>Metazoa</taxon>
        <taxon>Ecdysozoa</taxon>
        <taxon>Nematoda</taxon>
        <taxon>Chromadorea</taxon>
        <taxon>Rhabditida</taxon>
        <taxon>Rhabditina</taxon>
        <taxon>Rhabditomorpha</taxon>
        <taxon>Rhabditoidea</taxon>
        <taxon>Rhabditidae</taxon>
        <taxon>Peloderinae</taxon>
        <taxon>Caenorhabditis</taxon>
    </lineage>
</organism>
<reference key="1">
    <citation type="journal article" date="1998" name="Science">
        <title>Genome sequence of the nematode C. elegans: a platform for investigating biology.</title>
        <authorList>
            <consortium name="The C. elegans sequencing consortium"/>
        </authorList>
    </citation>
    <scope>NUCLEOTIDE SEQUENCE [LARGE SCALE GENOMIC DNA]</scope>
    <source>
        <strain>Bristol N2</strain>
    </source>
</reference>
<sequence>MGYFWFPWFSAIFVAVFSYYIWQWTFWRRRGVVGPMGFPVLGVFLNSLDNNFPFPLQCREWTKKFGKIYGFTEGTLKTLVISDPELVHEVFVTQYDNFYGRKRNPIQGDSEKEKRTNLFAAQGFRWKRLRAISSPTFSNSSLRKLYQTVEDSALELLRHIEKQSAGGKQIDMLKFYQEFTLDVIGRIAMGQTDSQMFKNPIMPIVSKLFQGNFAKLFLIGGIFPTFLVEIIRQILLKNLKVGSFRKINEITLDAIHNRIKQREEDQKNGIEIGEPADFIDLFLDAKAEDVEHFGENNGDFSKSTTYTNRQLTTEEIVGQCTVFLIAGFDTTALSLSYATYLLATHPEIQKKLQEEVNRECPNPEVTIDQLSKLKYMECVFKEALRLYPLGAFANSRRCMRNTKLGNMKVEVGTMIQVDTWTLHTDPNIWGDDAEDFKPERWQTPNSDQIYQKSGYIPFGLGPRQCIGMRLAYMEEKILLVHILRKFTFETGAKTEIPLKLIGRATTQPESVWMHLNPRN</sequence>
<comment type="function">
    <text>Cytochromes P450 are a group of heme-thiolate monooxygenases. They oxidize a variety of structurally unrelated compounds, including steroids, fatty acids, and xenobiotics.</text>
</comment>
<comment type="cofactor">
    <cofactor evidence="1">
        <name>heme</name>
        <dbReference type="ChEBI" id="CHEBI:30413"/>
    </cofactor>
</comment>
<comment type="similarity">
    <text evidence="2">Belongs to the cytochrome P450 family.</text>
</comment>
<keyword id="KW-0349">Heme</keyword>
<keyword id="KW-0408">Iron</keyword>
<keyword id="KW-0479">Metal-binding</keyword>
<keyword id="KW-0503">Monooxygenase</keyword>
<keyword id="KW-0560">Oxidoreductase</keyword>
<keyword id="KW-1185">Reference proteome</keyword>
<feature type="chain" id="PRO_0000052261" description="Putative cytochrome P450 CYP13A1">
    <location>
        <begin position="1"/>
        <end position="519"/>
    </location>
</feature>
<feature type="binding site" description="axial binding residue" evidence="1">
    <location>
        <position position="465"/>
    </location>
    <ligand>
        <name>heme</name>
        <dbReference type="ChEBI" id="CHEBI:30413"/>
    </ligand>
    <ligandPart>
        <name>Fe</name>
        <dbReference type="ChEBI" id="CHEBI:18248"/>
    </ligandPart>
</feature>